<keyword id="KW-0227">DNA damage</keyword>
<keyword id="KW-0234">DNA repair</keyword>
<keyword id="KW-0255">Endonuclease</keyword>
<keyword id="KW-0378">Hydrolase</keyword>
<keyword id="KW-0479">Metal-binding</keyword>
<keyword id="KW-0540">Nuclease</keyword>
<keyword id="KW-0862">Zinc</keyword>
<sequence>MLLGSHVSMSGKKMLEGSAIEAYEYGETTFMIYTGAPQNTRRKSIEDLNITKGHEVMEKYGLSNIVVHAPYIINIANTTKPETFNLGVDFLQQEIERTQAIGAKDIVLHPGAHVGAGVDAGINKIIEGLNEVLTNDNNVRIALETMAGKGTEIGRSFEELARIIDGVHNNERLSVCFDTCHTHDAGYNVKEDFDGVLNEFDKIIGVDRIKVVHVNDSKNDRGAQKDRHENIGFGYIGFDALNYIVHHDSFKDIPKILETPYVGEDKKNKKPPYKLEIEMLKQQQFDPELKNKVMQQ</sequence>
<organism>
    <name type="scientific">Staphylococcus aureus (strain JH9)</name>
    <dbReference type="NCBI Taxonomy" id="359786"/>
    <lineage>
        <taxon>Bacteria</taxon>
        <taxon>Bacillati</taxon>
        <taxon>Bacillota</taxon>
        <taxon>Bacilli</taxon>
        <taxon>Bacillales</taxon>
        <taxon>Staphylococcaceae</taxon>
        <taxon>Staphylococcus</taxon>
    </lineage>
</organism>
<accession>A5IT85</accession>
<proteinExistence type="inferred from homology"/>
<dbReference type="EC" id="3.1.21.2" evidence="1"/>
<dbReference type="EMBL" id="CP000703">
    <property type="protein sequence ID" value="ABQ49408.1"/>
    <property type="molecule type" value="Genomic_DNA"/>
</dbReference>
<dbReference type="RefSeq" id="WP_000924220.1">
    <property type="nucleotide sequence ID" value="NC_009487.1"/>
</dbReference>
<dbReference type="SMR" id="A5IT85"/>
<dbReference type="KEGG" id="saj:SaurJH9_1615"/>
<dbReference type="HOGENOM" id="CLU_025885_4_1_9"/>
<dbReference type="GO" id="GO:0008833">
    <property type="term" value="F:deoxyribonuclease IV (phage-T4-induced) activity"/>
    <property type="evidence" value="ECO:0007669"/>
    <property type="project" value="UniProtKB-UniRule"/>
</dbReference>
<dbReference type="GO" id="GO:0003677">
    <property type="term" value="F:DNA binding"/>
    <property type="evidence" value="ECO:0007669"/>
    <property type="project" value="InterPro"/>
</dbReference>
<dbReference type="GO" id="GO:0003906">
    <property type="term" value="F:DNA-(apurinic or apyrimidinic site) endonuclease activity"/>
    <property type="evidence" value="ECO:0007669"/>
    <property type="project" value="TreeGrafter"/>
</dbReference>
<dbReference type="GO" id="GO:0008081">
    <property type="term" value="F:phosphoric diester hydrolase activity"/>
    <property type="evidence" value="ECO:0007669"/>
    <property type="project" value="TreeGrafter"/>
</dbReference>
<dbReference type="GO" id="GO:0008270">
    <property type="term" value="F:zinc ion binding"/>
    <property type="evidence" value="ECO:0007669"/>
    <property type="project" value="UniProtKB-UniRule"/>
</dbReference>
<dbReference type="GO" id="GO:0006284">
    <property type="term" value="P:base-excision repair"/>
    <property type="evidence" value="ECO:0007669"/>
    <property type="project" value="TreeGrafter"/>
</dbReference>
<dbReference type="CDD" id="cd00019">
    <property type="entry name" value="AP2Ec"/>
    <property type="match status" value="1"/>
</dbReference>
<dbReference type="FunFam" id="3.20.20.150:FF:000001">
    <property type="entry name" value="Probable endonuclease 4"/>
    <property type="match status" value="1"/>
</dbReference>
<dbReference type="Gene3D" id="3.20.20.150">
    <property type="entry name" value="Divalent-metal-dependent TIM barrel enzymes"/>
    <property type="match status" value="1"/>
</dbReference>
<dbReference type="HAMAP" id="MF_00152">
    <property type="entry name" value="Nfo"/>
    <property type="match status" value="1"/>
</dbReference>
<dbReference type="InterPro" id="IPR001719">
    <property type="entry name" value="AP_endonuc_2"/>
</dbReference>
<dbReference type="InterPro" id="IPR018246">
    <property type="entry name" value="AP_endonuc_F2_Zn_BS"/>
</dbReference>
<dbReference type="InterPro" id="IPR036237">
    <property type="entry name" value="Xyl_isomerase-like_sf"/>
</dbReference>
<dbReference type="InterPro" id="IPR013022">
    <property type="entry name" value="Xyl_isomerase-like_TIM-brl"/>
</dbReference>
<dbReference type="NCBIfam" id="TIGR00587">
    <property type="entry name" value="nfo"/>
    <property type="match status" value="1"/>
</dbReference>
<dbReference type="NCBIfam" id="NF002196">
    <property type="entry name" value="PRK01060.1-1"/>
    <property type="match status" value="1"/>
</dbReference>
<dbReference type="PANTHER" id="PTHR21445:SF0">
    <property type="entry name" value="APURINIC-APYRIMIDINIC ENDONUCLEASE"/>
    <property type="match status" value="1"/>
</dbReference>
<dbReference type="PANTHER" id="PTHR21445">
    <property type="entry name" value="ENDONUCLEASE IV ENDODEOXYRIBONUCLEASE IV"/>
    <property type="match status" value="1"/>
</dbReference>
<dbReference type="Pfam" id="PF01261">
    <property type="entry name" value="AP_endonuc_2"/>
    <property type="match status" value="1"/>
</dbReference>
<dbReference type="SMART" id="SM00518">
    <property type="entry name" value="AP2Ec"/>
    <property type="match status" value="1"/>
</dbReference>
<dbReference type="SUPFAM" id="SSF51658">
    <property type="entry name" value="Xylose isomerase-like"/>
    <property type="match status" value="1"/>
</dbReference>
<dbReference type="PROSITE" id="PS00729">
    <property type="entry name" value="AP_NUCLEASE_F2_1"/>
    <property type="match status" value="1"/>
</dbReference>
<dbReference type="PROSITE" id="PS00730">
    <property type="entry name" value="AP_NUCLEASE_F2_2"/>
    <property type="match status" value="1"/>
</dbReference>
<dbReference type="PROSITE" id="PS00731">
    <property type="entry name" value="AP_NUCLEASE_F2_3"/>
    <property type="match status" value="1"/>
</dbReference>
<dbReference type="PROSITE" id="PS51432">
    <property type="entry name" value="AP_NUCLEASE_F2_4"/>
    <property type="match status" value="1"/>
</dbReference>
<comment type="function">
    <text evidence="1">Endonuclease IV plays a role in DNA repair. It cleaves phosphodiester bonds at apurinic or apyrimidinic (AP) sites, generating a 3'-hydroxyl group and a 5'-terminal sugar phosphate.</text>
</comment>
<comment type="catalytic activity">
    <reaction evidence="1">
        <text>Endonucleolytic cleavage to 5'-phosphooligonucleotide end-products.</text>
        <dbReference type="EC" id="3.1.21.2"/>
    </reaction>
</comment>
<comment type="cofactor">
    <cofactor evidence="1">
        <name>Zn(2+)</name>
        <dbReference type="ChEBI" id="CHEBI:29105"/>
    </cofactor>
    <text evidence="1">Binds 3 Zn(2+) ions.</text>
</comment>
<comment type="similarity">
    <text evidence="1">Belongs to the AP endonuclease 2 family.</text>
</comment>
<evidence type="ECO:0000255" key="1">
    <source>
        <dbReference type="HAMAP-Rule" id="MF_00152"/>
    </source>
</evidence>
<gene>
    <name evidence="1" type="primary">nfo</name>
    <name type="ordered locus">SaurJH9_1615</name>
</gene>
<protein>
    <recommendedName>
        <fullName evidence="1">Probable endonuclease 4</fullName>
        <ecNumber evidence="1">3.1.21.2</ecNumber>
    </recommendedName>
    <alternativeName>
        <fullName evidence="1">Endodeoxyribonuclease IV</fullName>
    </alternativeName>
    <alternativeName>
        <fullName evidence="1">Endonuclease IV</fullName>
    </alternativeName>
</protein>
<reference key="1">
    <citation type="submission" date="2007-05" db="EMBL/GenBank/DDBJ databases">
        <title>Complete sequence of chromosome of Staphylococcus aureus subsp. aureus JH9.</title>
        <authorList>
            <consortium name="US DOE Joint Genome Institute"/>
            <person name="Copeland A."/>
            <person name="Lucas S."/>
            <person name="Lapidus A."/>
            <person name="Barry K."/>
            <person name="Detter J.C."/>
            <person name="Glavina del Rio T."/>
            <person name="Hammon N."/>
            <person name="Israni S."/>
            <person name="Pitluck S."/>
            <person name="Chain P."/>
            <person name="Malfatti S."/>
            <person name="Shin M."/>
            <person name="Vergez L."/>
            <person name="Schmutz J."/>
            <person name="Larimer F."/>
            <person name="Land M."/>
            <person name="Hauser L."/>
            <person name="Kyrpides N."/>
            <person name="Kim E."/>
            <person name="Tomasz A."/>
            <person name="Richardson P."/>
        </authorList>
    </citation>
    <scope>NUCLEOTIDE SEQUENCE [LARGE SCALE GENOMIC DNA]</scope>
    <source>
        <strain>JH9</strain>
    </source>
</reference>
<feature type="chain" id="PRO_1000076810" description="Probable endonuclease 4">
    <location>
        <begin position="1"/>
        <end position="296"/>
    </location>
</feature>
<feature type="binding site" evidence="1">
    <location>
        <position position="68"/>
    </location>
    <ligand>
        <name>Zn(2+)</name>
        <dbReference type="ChEBI" id="CHEBI:29105"/>
        <label>1</label>
    </ligand>
</feature>
<feature type="binding site" evidence="1">
    <location>
        <position position="109"/>
    </location>
    <ligand>
        <name>Zn(2+)</name>
        <dbReference type="ChEBI" id="CHEBI:29105"/>
        <label>1</label>
    </ligand>
</feature>
<feature type="binding site" evidence="1">
    <location>
        <position position="144"/>
    </location>
    <ligand>
        <name>Zn(2+)</name>
        <dbReference type="ChEBI" id="CHEBI:29105"/>
        <label>1</label>
    </ligand>
</feature>
<feature type="binding site" evidence="1">
    <location>
        <position position="144"/>
    </location>
    <ligand>
        <name>Zn(2+)</name>
        <dbReference type="ChEBI" id="CHEBI:29105"/>
        <label>2</label>
    </ligand>
</feature>
<feature type="binding site" evidence="1">
    <location>
        <position position="178"/>
    </location>
    <ligand>
        <name>Zn(2+)</name>
        <dbReference type="ChEBI" id="CHEBI:29105"/>
        <label>2</label>
    </ligand>
</feature>
<feature type="binding site" evidence="1">
    <location>
        <position position="181"/>
    </location>
    <ligand>
        <name>Zn(2+)</name>
        <dbReference type="ChEBI" id="CHEBI:29105"/>
        <label>3</label>
    </ligand>
</feature>
<feature type="binding site" evidence="1">
    <location>
        <position position="213"/>
    </location>
    <ligand>
        <name>Zn(2+)</name>
        <dbReference type="ChEBI" id="CHEBI:29105"/>
        <label>2</label>
    </ligand>
</feature>
<feature type="binding site" evidence="1">
    <location>
        <position position="226"/>
    </location>
    <ligand>
        <name>Zn(2+)</name>
        <dbReference type="ChEBI" id="CHEBI:29105"/>
        <label>3</label>
    </ligand>
</feature>
<feature type="binding site" evidence="1">
    <location>
        <position position="228"/>
    </location>
    <ligand>
        <name>Zn(2+)</name>
        <dbReference type="ChEBI" id="CHEBI:29105"/>
        <label>3</label>
    </ligand>
</feature>
<feature type="binding site" evidence="1">
    <location>
        <position position="258"/>
    </location>
    <ligand>
        <name>Zn(2+)</name>
        <dbReference type="ChEBI" id="CHEBI:29105"/>
        <label>2</label>
    </ligand>
</feature>
<name>END4_STAA9</name>